<name>YH180_YEAST</name>
<reference key="1">
    <citation type="journal article" date="1994" name="Science">
        <title>Complete nucleotide sequence of Saccharomyces cerevisiae chromosome VIII.</title>
        <authorList>
            <person name="Johnston M."/>
            <person name="Andrews S."/>
            <person name="Brinkman R."/>
            <person name="Cooper J."/>
            <person name="Ding H."/>
            <person name="Dover J."/>
            <person name="Du Z."/>
            <person name="Favello A."/>
            <person name="Fulton L."/>
            <person name="Gattung S."/>
            <person name="Geisel C."/>
            <person name="Kirsten J."/>
            <person name="Kucaba T."/>
            <person name="Hillier L.W."/>
            <person name="Jier M."/>
            <person name="Johnston L."/>
            <person name="Langston Y."/>
            <person name="Latreille P."/>
            <person name="Louis E.J."/>
            <person name="Macri C."/>
            <person name="Mardis E."/>
            <person name="Menezes S."/>
            <person name="Mouser L."/>
            <person name="Nhan M."/>
            <person name="Rifkin L."/>
            <person name="Riles L."/>
            <person name="St Peter H."/>
            <person name="Trevaskis E."/>
            <person name="Vaughan K."/>
            <person name="Vignati D."/>
            <person name="Wilcox L."/>
            <person name="Wohldman P."/>
            <person name="Waterston R."/>
            <person name="Wilson R."/>
            <person name="Vaudin M."/>
        </authorList>
    </citation>
    <scope>NUCLEOTIDE SEQUENCE [LARGE SCALE GENOMIC DNA]</scope>
    <source>
        <strain>ATCC 204508 / S288c</strain>
    </source>
</reference>
<reference key="2">
    <citation type="journal article" date="2014" name="G3 (Bethesda)">
        <title>The reference genome sequence of Saccharomyces cerevisiae: Then and now.</title>
        <authorList>
            <person name="Engel S.R."/>
            <person name="Dietrich F.S."/>
            <person name="Fisk D.G."/>
            <person name="Binkley G."/>
            <person name="Balakrishnan R."/>
            <person name="Costanzo M.C."/>
            <person name="Dwight S.S."/>
            <person name="Hitz B.C."/>
            <person name="Karra K."/>
            <person name="Nash R.S."/>
            <person name="Weng S."/>
            <person name="Wong E.D."/>
            <person name="Lloyd P."/>
            <person name="Skrzypek M.S."/>
            <person name="Miyasato S.R."/>
            <person name="Simison M."/>
            <person name="Cherry J.M."/>
        </authorList>
    </citation>
    <scope>GENOME REANNOTATION</scope>
    <source>
        <strain>ATCC 204508 / S288c</strain>
    </source>
</reference>
<reference key="3">
    <citation type="journal article" date="2003" name="Genome Res.">
        <title>Systematic discovery of new genes in the Saccharomyces cerevisiae genome.</title>
        <authorList>
            <person name="Kessler M.M."/>
            <person name="Zeng Q."/>
            <person name="Hogan S."/>
            <person name="Cook R."/>
            <person name="Morales A.J."/>
            <person name="Cottarel G."/>
        </authorList>
    </citation>
    <scope>GENOME REANNOTATION</scope>
</reference>
<accession>P0C5N5</accession>
<evidence type="ECO:0000305" key="1"/>
<evidence type="ECO:0000305" key="2">
    <source>
    </source>
</evidence>
<sequence>MPPARIELATFALQVQRSTTKLRRLKIQLCCISK</sequence>
<dbReference type="EMBL" id="U00028">
    <property type="status" value="NOT_ANNOTATED_CDS"/>
    <property type="molecule type" value="Genomic_DNA"/>
</dbReference>
<dbReference type="STRING" id="4932.YHR180C-B"/>
<dbReference type="PaxDb" id="4932-YHR180C-B"/>
<dbReference type="EnsemblFungi" id="YHR180C-B_mRNA">
    <property type="protein sequence ID" value="YHR180C-B"/>
    <property type="gene ID" value="YHR180C-B"/>
</dbReference>
<dbReference type="AGR" id="SGD:S000028554"/>
<dbReference type="SGD" id="S000028554">
    <property type="gene designation" value="YHR180C-B"/>
</dbReference>
<dbReference type="HOGENOM" id="CLU_3377406_0_0_1"/>
<protein>
    <recommendedName>
        <fullName>Putative uncharacterized protein YHR180C-B</fullName>
    </recommendedName>
</protein>
<organism>
    <name type="scientific">Saccharomyces cerevisiae (strain ATCC 204508 / S288c)</name>
    <name type="common">Baker's yeast</name>
    <dbReference type="NCBI Taxonomy" id="559292"/>
    <lineage>
        <taxon>Eukaryota</taxon>
        <taxon>Fungi</taxon>
        <taxon>Dikarya</taxon>
        <taxon>Ascomycota</taxon>
        <taxon>Saccharomycotina</taxon>
        <taxon>Saccharomycetes</taxon>
        <taxon>Saccharomycetales</taxon>
        <taxon>Saccharomycetaceae</taxon>
        <taxon>Saccharomyces</taxon>
    </lineage>
</organism>
<gene>
    <name type="ordered locus">YHR180C-B</name>
    <name type="ORF">smORF286</name>
</gene>
<comment type="miscellaneous">
    <text evidence="1">Completely overlaps YHR180W-A.</text>
</comment>
<comment type="caution">
    <text evidence="2">Product of a dubious gene prediction unlikely to encode a functional protein. Because of that it is not part of the S.cerevisiae S288c complete/reference proteome set.</text>
</comment>
<feature type="chain" id="PRO_0000309033" description="Putative uncharacterized protein YHR180C-B">
    <location>
        <begin position="1"/>
        <end position="34"/>
    </location>
</feature>
<proteinExistence type="uncertain"/>